<keyword id="KW-0687">Ribonucleoprotein</keyword>
<keyword id="KW-0689">Ribosomal protein</keyword>
<keyword id="KW-0694">RNA-binding</keyword>
<keyword id="KW-0699">rRNA-binding</keyword>
<accession>Q6GG27</accession>
<protein>
    <recommendedName>
        <fullName evidence="1">Large ribosomal subunit protein bL20</fullName>
    </recommendedName>
    <alternativeName>
        <fullName evidence="2">50S ribosomal protein L20</fullName>
    </alternativeName>
</protein>
<gene>
    <name evidence="1" type="primary">rplT</name>
    <name type="ordered locus">SAR1758</name>
</gene>
<reference key="1">
    <citation type="journal article" date="2004" name="Proc. Natl. Acad. Sci. U.S.A.">
        <title>Complete genomes of two clinical Staphylococcus aureus strains: evidence for the rapid evolution of virulence and drug resistance.</title>
        <authorList>
            <person name="Holden M.T.G."/>
            <person name="Feil E.J."/>
            <person name="Lindsay J.A."/>
            <person name="Peacock S.J."/>
            <person name="Day N.P.J."/>
            <person name="Enright M.C."/>
            <person name="Foster T.J."/>
            <person name="Moore C.E."/>
            <person name="Hurst L."/>
            <person name="Atkin R."/>
            <person name="Barron A."/>
            <person name="Bason N."/>
            <person name="Bentley S.D."/>
            <person name="Chillingworth C."/>
            <person name="Chillingworth T."/>
            <person name="Churcher C."/>
            <person name="Clark L."/>
            <person name="Corton C."/>
            <person name="Cronin A."/>
            <person name="Doggett J."/>
            <person name="Dowd L."/>
            <person name="Feltwell T."/>
            <person name="Hance Z."/>
            <person name="Harris B."/>
            <person name="Hauser H."/>
            <person name="Holroyd S."/>
            <person name="Jagels K."/>
            <person name="James K.D."/>
            <person name="Lennard N."/>
            <person name="Line A."/>
            <person name="Mayes R."/>
            <person name="Moule S."/>
            <person name="Mungall K."/>
            <person name="Ormond D."/>
            <person name="Quail M.A."/>
            <person name="Rabbinowitsch E."/>
            <person name="Rutherford K.M."/>
            <person name="Sanders M."/>
            <person name="Sharp S."/>
            <person name="Simmonds M."/>
            <person name="Stevens K."/>
            <person name="Whitehead S."/>
            <person name="Barrell B.G."/>
            <person name="Spratt B.G."/>
            <person name="Parkhill J."/>
        </authorList>
    </citation>
    <scope>NUCLEOTIDE SEQUENCE [LARGE SCALE GENOMIC DNA]</scope>
    <source>
        <strain>MRSA252</strain>
    </source>
</reference>
<organism>
    <name type="scientific">Staphylococcus aureus (strain MRSA252)</name>
    <dbReference type="NCBI Taxonomy" id="282458"/>
    <lineage>
        <taxon>Bacteria</taxon>
        <taxon>Bacillati</taxon>
        <taxon>Bacillota</taxon>
        <taxon>Bacilli</taxon>
        <taxon>Bacillales</taxon>
        <taxon>Staphylococcaceae</taxon>
        <taxon>Staphylococcus</taxon>
    </lineage>
</organism>
<comment type="function">
    <text evidence="1">Binds directly to 23S ribosomal RNA and is necessary for the in vitro assembly process of the 50S ribosomal subunit. It is not involved in the protein synthesizing functions of that subunit.</text>
</comment>
<comment type="similarity">
    <text evidence="1">Belongs to the bacterial ribosomal protein bL20 family.</text>
</comment>
<proteinExistence type="inferred from homology"/>
<feature type="chain" id="PRO_0000177226" description="Large ribosomal subunit protein bL20">
    <location>
        <begin position="1"/>
        <end position="118"/>
    </location>
</feature>
<name>RL20_STAAR</name>
<sequence>MPRVKGGTVTRARRKKTIKLAKGYFGSKHTLYKVAKQQVMKSGQYAFRDRRQRKRDFRKLWITRINAAARQHEMSYSRLMNGLKKAGIDINRKMLSEIAISDEKAFAQLVTKAKDALK</sequence>
<dbReference type="EMBL" id="BX571856">
    <property type="protein sequence ID" value="CAG40749.1"/>
    <property type="molecule type" value="Genomic_DNA"/>
</dbReference>
<dbReference type="RefSeq" id="WP_001138360.1">
    <property type="nucleotide sequence ID" value="NC_002952.2"/>
</dbReference>
<dbReference type="SMR" id="Q6GG27"/>
<dbReference type="GeneID" id="98346040"/>
<dbReference type="KEGG" id="sar:SAR1758"/>
<dbReference type="HOGENOM" id="CLU_123265_0_1_9"/>
<dbReference type="Proteomes" id="UP000000596">
    <property type="component" value="Chromosome"/>
</dbReference>
<dbReference type="GO" id="GO:1990904">
    <property type="term" value="C:ribonucleoprotein complex"/>
    <property type="evidence" value="ECO:0007669"/>
    <property type="project" value="UniProtKB-KW"/>
</dbReference>
<dbReference type="GO" id="GO:0005840">
    <property type="term" value="C:ribosome"/>
    <property type="evidence" value="ECO:0007669"/>
    <property type="project" value="UniProtKB-KW"/>
</dbReference>
<dbReference type="GO" id="GO:0019843">
    <property type="term" value="F:rRNA binding"/>
    <property type="evidence" value="ECO:0007669"/>
    <property type="project" value="UniProtKB-UniRule"/>
</dbReference>
<dbReference type="GO" id="GO:0003735">
    <property type="term" value="F:structural constituent of ribosome"/>
    <property type="evidence" value="ECO:0007669"/>
    <property type="project" value="InterPro"/>
</dbReference>
<dbReference type="GO" id="GO:0000027">
    <property type="term" value="P:ribosomal large subunit assembly"/>
    <property type="evidence" value="ECO:0007669"/>
    <property type="project" value="UniProtKB-UniRule"/>
</dbReference>
<dbReference type="GO" id="GO:0006412">
    <property type="term" value="P:translation"/>
    <property type="evidence" value="ECO:0007669"/>
    <property type="project" value="InterPro"/>
</dbReference>
<dbReference type="CDD" id="cd07026">
    <property type="entry name" value="Ribosomal_L20"/>
    <property type="match status" value="1"/>
</dbReference>
<dbReference type="FunFam" id="1.10.1900.20:FF:000001">
    <property type="entry name" value="50S ribosomal protein L20"/>
    <property type="match status" value="1"/>
</dbReference>
<dbReference type="Gene3D" id="6.10.160.10">
    <property type="match status" value="1"/>
</dbReference>
<dbReference type="Gene3D" id="1.10.1900.20">
    <property type="entry name" value="Ribosomal protein L20"/>
    <property type="match status" value="1"/>
</dbReference>
<dbReference type="HAMAP" id="MF_00382">
    <property type="entry name" value="Ribosomal_bL20"/>
    <property type="match status" value="1"/>
</dbReference>
<dbReference type="InterPro" id="IPR005813">
    <property type="entry name" value="Ribosomal_bL20"/>
</dbReference>
<dbReference type="InterPro" id="IPR049946">
    <property type="entry name" value="RIBOSOMAL_L20_CS"/>
</dbReference>
<dbReference type="InterPro" id="IPR035566">
    <property type="entry name" value="Ribosomal_protein_bL20_C"/>
</dbReference>
<dbReference type="NCBIfam" id="TIGR01032">
    <property type="entry name" value="rplT_bact"/>
    <property type="match status" value="1"/>
</dbReference>
<dbReference type="PANTHER" id="PTHR10986">
    <property type="entry name" value="39S RIBOSOMAL PROTEIN L20"/>
    <property type="match status" value="1"/>
</dbReference>
<dbReference type="Pfam" id="PF00453">
    <property type="entry name" value="Ribosomal_L20"/>
    <property type="match status" value="1"/>
</dbReference>
<dbReference type="PRINTS" id="PR00062">
    <property type="entry name" value="RIBOSOMALL20"/>
</dbReference>
<dbReference type="SUPFAM" id="SSF74731">
    <property type="entry name" value="Ribosomal protein L20"/>
    <property type="match status" value="1"/>
</dbReference>
<dbReference type="PROSITE" id="PS00937">
    <property type="entry name" value="RIBOSOMAL_L20"/>
    <property type="match status" value="1"/>
</dbReference>
<evidence type="ECO:0000255" key="1">
    <source>
        <dbReference type="HAMAP-Rule" id="MF_00382"/>
    </source>
</evidence>
<evidence type="ECO:0000305" key="2"/>